<gene>
    <name evidence="1" type="primary">efp</name>
    <name type="ordered locus">YpAngola_A0719</name>
</gene>
<reference key="1">
    <citation type="journal article" date="2010" name="J. Bacteriol.">
        <title>Genome sequence of the deep-rooted Yersinia pestis strain Angola reveals new insights into the evolution and pangenome of the plague bacterium.</title>
        <authorList>
            <person name="Eppinger M."/>
            <person name="Worsham P.L."/>
            <person name="Nikolich M.P."/>
            <person name="Riley D.R."/>
            <person name="Sebastian Y."/>
            <person name="Mou S."/>
            <person name="Achtman M."/>
            <person name="Lindler L.E."/>
            <person name="Ravel J."/>
        </authorList>
    </citation>
    <scope>NUCLEOTIDE SEQUENCE [LARGE SCALE GENOMIC DNA]</scope>
    <source>
        <strain>Angola</strain>
    </source>
</reference>
<comment type="function">
    <text evidence="1">Involved in peptide bond synthesis. Alleviates ribosome stalling that occurs when 3 or more consecutive Pro residues or the sequence PPG is present in a protein, possibly by augmenting the peptidyl transferase activity of the ribosome. Modification of Lys-34 is required for alleviation.</text>
</comment>
<comment type="pathway">
    <text evidence="1">Protein biosynthesis; polypeptide chain elongation.</text>
</comment>
<comment type="subcellular location">
    <subcellularLocation>
        <location evidence="1">Cytoplasm</location>
    </subcellularLocation>
</comment>
<comment type="PTM">
    <text evidence="1">May be beta-lysylated on the epsilon-amino group of Lys-34 by the combined action of EpmA and EpmB, and then hydroxylated on the C5 position of the same residue by EpmC (if this protein is present). Lysylation is critical for the stimulatory effect of EF-P on peptide-bond formation. The lysylation moiety may extend toward the peptidyltransferase center and stabilize the terminal 3-CCA end of the tRNA. Hydroxylation of the C5 position on Lys-34 may allow additional potential stabilizing hydrogen-bond interactions with the P-tRNA.</text>
</comment>
<comment type="similarity">
    <text evidence="1">Belongs to the elongation factor P family.</text>
</comment>
<feature type="chain" id="PRO_1000096229" description="Elongation factor P">
    <location>
        <begin position="1"/>
        <end position="188"/>
    </location>
</feature>
<feature type="modified residue" description="N6-(3,6-diaminohexanoyl)-5-hydroxylysine" evidence="1">
    <location>
        <position position="34"/>
    </location>
</feature>
<organism>
    <name type="scientific">Yersinia pestis bv. Antiqua (strain Angola)</name>
    <dbReference type="NCBI Taxonomy" id="349746"/>
    <lineage>
        <taxon>Bacteria</taxon>
        <taxon>Pseudomonadati</taxon>
        <taxon>Pseudomonadota</taxon>
        <taxon>Gammaproteobacteria</taxon>
        <taxon>Enterobacterales</taxon>
        <taxon>Yersiniaceae</taxon>
        <taxon>Yersinia</taxon>
    </lineage>
</organism>
<accession>A9QYP8</accession>
<evidence type="ECO:0000255" key="1">
    <source>
        <dbReference type="HAMAP-Rule" id="MF_00141"/>
    </source>
</evidence>
<keyword id="KW-0963">Cytoplasm</keyword>
<keyword id="KW-0251">Elongation factor</keyword>
<keyword id="KW-0379">Hydroxylation</keyword>
<keyword id="KW-0648">Protein biosynthesis</keyword>
<protein>
    <recommendedName>
        <fullName evidence="1">Elongation factor P</fullName>
        <shortName evidence="1">EF-P</shortName>
    </recommendedName>
</protein>
<name>EFP_YERPG</name>
<proteinExistence type="inferred from homology"/>
<dbReference type="EMBL" id="CP000901">
    <property type="protein sequence ID" value="ABX86595.1"/>
    <property type="molecule type" value="Genomic_DNA"/>
</dbReference>
<dbReference type="RefSeq" id="WP_002209131.1">
    <property type="nucleotide sequence ID" value="NZ_CP009935.1"/>
</dbReference>
<dbReference type="SMR" id="A9QYP8"/>
<dbReference type="GeneID" id="57974254"/>
<dbReference type="KEGG" id="ypg:YpAngola_A0719"/>
<dbReference type="PATRIC" id="fig|349746.12.peg.1666"/>
<dbReference type="UniPathway" id="UPA00345"/>
<dbReference type="GO" id="GO:0005737">
    <property type="term" value="C:cytoplasm"/>
    <property type="evidence" value="ECO:0007669"/>
    <property type="project" value="UniProtKB-SubCell"/>
</dbReference>
<dbReference type="GO" id="GO:0003746">
    <property type="term" value="F:translation elongation factor activity"/>
    <property type="evidence" value="ECO:0007669"/>
    <property type="project" value="UniProtKB-UniRule"/>
</dbReference>
<dbReference type="GO" id="GO:0043043">
    <property type="term" value="P:peptide biosynthetic process"/>
    <property type="evidence" value="ECO:0007669"/>
    <property type="project" value="InterPro"/>
</dbReference>
<dbReference type="CDD" id="cd04470">
    <property type="entry name" value="S1_EF-P_repeat_1"/>
    <property type="match status" value="1"/>
</dbReference>
<dbReference type="CDD" id="cd05794">
    <property type="entry name" value="S1_EF-P_repeat_2"/>
    <property type="match status" value="1"/>
</dbReference>
<dbReference type="FunFam" id="2.30.30.30:FF:000003">
    <property type="entry name" value="Elongation factor P"/>
    <property type="match status" value="1"/>
</dbReference>
<dbReference type="FunFam" id="2.40.50.140:FF:000004">
    <property type="entry name" value="Elongation factor P"/>
    <property type="match status" value="1"/>
</dbReference>
<dbReference type="FunFam" id="2.40.50.140:FF:000009">
    <property type="entry name" value="Elongation factor P"/>
    <property type="match status" value="1"/>
</dbReference>
<dbReference type="Gene3D" id="2.30.30.30">
    <property type="match status" value="1"/>
</dbReference>
<dbReference type="Gene3D" id="2.40.50.140">
    <property type="entry name" value="Nucleic acid-binding proteins"/>
    <property type="match status" value="2"/>
</dbReference>
<dbReference type="HAMAP" id="MF_00141">
    <property type="entry name" value="EF_P"/>
    <property type="match status" value="1"/>
</dbReference>
<dbReference type="InterPro" id="IPR015365">
    <property type="entry name" value="Elong-fact-P_C"/>
</dbReference>
<dbReference type="InterPro" id="IPR012340">
    <property type="entry name" value="NA-bd_OB-fold"/>
</dbReference>
<dbReference type="InterPro" id="IPR014722">
    <property type="entry name" value="Rib_uL2_dom2"/>
</dbReference>
<dbReference type="InterPro" id="IPR020599">
    <property type="entry name" value="Transl_elong_fac_P/YeiP"/>
</dbReference>
<dbReference type="InterPro" id="IPR013185">
    <property type="entry name" value="Transl_elong_KOW-like"/>
</dbReference>
<dbReference type="InterPro" id="IPR001059">
    <property type="entry name" value="Transl_elong_P/YeiP_cen"/>
</dbReference>
<dbReference type="InterPro" id="IPR013852">
    <property type="entry name" value="Transl_elong_P/YeiP_CS"/>
</dbReference>
<dbReference type="InterPro" id="IPR011768">
    <property type="entry name" value="Transl_elongation_fac_P"/>
</dbReference>
<dbReference type="InterPro" id="IPR008991">
    <property type="entry name" value="Translation_prot_SH3-like_sf"/>
</dbReference>
<dbReference type="NCBIfam" id="TIGR00038">
    <property type="entry name" value="efp"/>
    <property type="match status" value="1"/>
</dbReference>
<dbReference type="NCBIfam" id="NF001810">
    <property type="entry name" value="PRK00529.1"/>
    <property type="match status" value="1"/>
</dbReference>
<dbReference type="PANTHER" id="PTHR30053">
    <property type="entry name" value="ELONGATION FACTOR P"/>
    <property type="match status" value="1"/>
</dbReference>
<dbReference type="PANTHER" id="PTHR30053:SF12">
    <property type="entry name" value="ELONGATION FACTOR P (EF-P) FAMILY PROTEIN"/>
    <property type="match status" value="1"/>
</dbReference>
<dbReference type="Pfam" id="PF01132">
    <property type="entry name" value="EFP"/>
    <property type="match status" value="1"/>
</dbReference>
<dbReference type="Pfam" id="PF08207">
    <property type="entry name" value="EFP_N"/>
    <property type="match status" value="1"/>
</dbReference>
<dbReference type="Pfam" id="PF09285">
    <property type="entry name" value="Elong-fact-P_C"/>
    <property type="match status" value="1"/>
</dbReference>
<dbReference type="PIRSF" id="PIRSF005901">
    <property type="entry name" value="EF-P"/>
    <property type="match status" value="1"/>
</dbReference>
<dbReference type="SMART" id="SM01185">
    <property type="entry name" value="EFP"/>
    <property type="match status" value="1"/>
</dbReference>
<dbReference type="SMART" id="SM00841">
    <property type="entry name" value="Elong-fact-P_C"/>
    <property type="match status" value="1"/>
</dbReference>
<dbReference type="SUPFAM" id="SSF50249">
    <property type="entry name" value="Nucleic acid-binding proteins"/>
    <property type="match status" value="2"/>
</dbReference>
<dbReference type="SUPFAM" id="SSF50104">
    <property type="entry name" value="Translation proteins SH3-like domain"/>
    <property type="match status" value="1"/>
</dbReference>
<dbReference type="PROSITE" id="PS01275">
    <property type="entry name" value="EFP"/>
    <property type="match status" value="1"/>
</dbReference>
<sequence>MASYYSNDFRPGLKIMFEGEPYAVESSEFVKPGKGQAFARVKMRRLLTGGRVEKTFKSTDSLEGADVNDMNLTYLYNDGEFWHFMNNETYEQLQADAKAVGDNGKWLIDQAECIVTLWNGQPIAVTPPNFVELEIVDTDPGLKGDTAGTGGKPATLSTGAVVKVPLFVQVGEIIKVDTRSGEYVSRVK</sequence>